<evidence type="ECO:0000255" key="1">
    <source>
        <dbReference type="HAMAP-Rule" id="MF_00046"/>
    </source>
</evidence>
<gene>
    <name evidence="1" type="primary">murC</name>
    <name type="ordered locus">BMEA_A1478</name>
</gene>
<dbReference type="EC" id="6.3.2.8" evidence="1"/>
<dbReference type="EMBL" id="CP001488">
    <property type="protein sequence ID" value="ACO01191.1"/>
    <property type="molecule type" value="Genomic_DNA"/>
</dbReference>
<dbReference type="RefSeq" id="WP_002964538.1">
    <property type="nucleotide sequence ID" value="NC_012441.1"/>
</dbReference>
<dbReference type="SMR" id="C0RE69"/>
<dbReference type="GeneID" id="97533364"/>
<dbReference type="KEGG" id="bmi:BMEA_A1478"/>
<dbReference type="HOGENOM" id="CLU_028104_2_2_5"/>
<dbReference type="UniPathway" id="UPA00219"/>
<dbReference type="Proteomes" id="UP000001748">
    <property type="component" value="Chromosome I"/>
</dbReference>
<dbReference type="GO" id="GO:0005737">
    <property type="term" value="C:cytoplasm"/>
    <property type="evidence" value="ECO:0007669"/>
    <property type="project" value="UniProtKB-SubCell"/>
</dbReference>
<dbReference type="GO" id="GO:0005524">
    <property type="term" value="F:ATP binding"/>
    <property type="evidence" value="ECO:0007669"/>
    <property type="project" value="UniProtKB-UniRule"/>
</dbReference>
<dbReference type="GO" id="GO:0008763">
    <property type="term" value="F:UDP-N-acetylmuramate-L-alanine ligase activity"/>
    <property type="evidence" value="ECO:0007669"/>
    <property type="project" value="UniProtKB-UniRule"/>
</dbReference>
<dbReference type="GO" id="GO:0051301">
    <property type="term" value="P:cell division"/>
    <property type="evidence" value="ECO:0007669"/>
    <property type="project" value="UniProtKB-KW"/>
</dbReference>
<dbReference type="GO" id="GO:0071555">
    <property type="term" value="P:cell wall organization"/>
    <property type="evidence" value="ECO:0007669"/>
    <property type="project" value="UniProtKB-KW"/>
</dbReference>
<dbReference type="GO" id="GO:0009252">
    <property type="term" value="P:peptidoglycan biosynthetic process"/>
    <property type="evidence" value="ECO:0007669"/>
    <property type="project" value="UniProtKB-UniRule"/>
</dbReference>
<dbReference type="GO" id="GO:0008360">
    <property type="term" value="P:regulation of cell shape"/>
    <property type="evidence" value="ECO:0007669"/>
    <property type="project" value="UniProtKB-KW"/>
</dbReference>
<dbReference type="Gene3D" id="3.90.190.20">
    <property type="entry name" value="Mur ligase, C-terminal domain"/>
    <property type="match status" value="1"/>
</dbReference>
<dbReference type="Gene3D" id="3.40.1190.10">
    <property type="entry name" value="Mur-like, catalytic domain"/>
    <property type="match status" value="1"/>
</dbReference>
<dbReference type="Gene3D" id="3.40.50.720">
    <property type="entry name" value="NAD(P)-binding Rossmann-like Domain"/>
    <property type="match status" value="1"/>
</dbReference>
<dbReference type="HAMAP" id="MF_00046">
    <property type="entry name" value="MurC"/>
    <property type="match status" value="1"/>
</dbReference>
<dbReference type="InterPro" id="IPR036565">
    <property type="entry name" value="Mur-like_cat_sf"/>
</dbReference>
<dbReference type="InterPro" id="IPR004101">
    <property type="entry name" value="Mur_ligase_C"/>
</dbReference>
<dbReference type="InterPro" id="IPR036615">
    <property type="entry name" value="Mur_ligase_C_dom_sf"/>
</dbReference>
<dbReference type="InterPro" id="IPR013221">
    <property type="entry name" value="Mur_ligase_cen"/>
</dbReference>
<dbReference type="InterPro" id="IPR000713">
    <property type="entry name" value="Mur_ligase_N"/>
</dbReference>
<dbReference type="InterPro" id="IPR050061">
    <property type="entry name" value="MurCDEF_pg_biosynth"/>
</dbReference>
<dbReference type="InterPro" id="IPR005758">
    <property type="entry name" value="UDP-N-AcMur_Ala_ligase_MurC"/>
</dbReference>
<dbReference type="NCBIfam" id="TIGR01082">
    <property type="entry name" value="murC"/>
    <property type="match status" value="1"/>
</dbReference>
<dbReference type="PANTHER" id="PTHR43445:SF3">
    <property type="entry name" value="UDP-N-ACETYLMURAMATE--L-ALANINE LIGASE"/>
    <property type="match status" value="1"/>
</dbReference>
<dbReference type="PANTHER" id="PTHR43445">
    <property type="entry name" value="UDP-N-ACETYLMURAMATE--L-ALANINE LIGASE-RELATED"/>
    <property type="match status" value="1"/>
</dbReference>
<dbReference type="Pfam" id="PF01225">
    <property type="entry name" value="Mur_ligase"/>
    <property type="match status" value="1"/>
</dbReference>
<dbReference type="Pfam" id="PF02875">
    <property type="entry name" value="Mur_ligase_C"/>
    <property type="match status" value="1"/>
</dbReference>
<dbReference type="Pfam" id="PF08245">
    <property type="entry name" value="Mur_ligase_M"/>
    <property type="match status" value="1"/>
</dbReference>
<dbReference type="SUPFAM" id="SSF51984">
    <property type="entry name" value="MurCD N-terminal domain"/>
    <property type="match status" value="1"/>
</dbReference>
<dbReference type="SUPFAM" id="SSF53623">
    <property type="entry name" value="MurD-like peptide ligases, catalytic domain"/>
    <property type="match status" value="1"/>
</dbReference>
<dbReference type="SUPFAM" id="SSF53244">
    <property type="entry name" value="MurD-like peptide ligases, peptide-binding domain"/>
    <property type="match status" value="1"/>
</dbReference>
<organism>
    <name type="scientific">Brucella melitensis biotype 2 (strain ATCC 23457)</name>
    <dbReference type="NCBI Taxonomy" id="546272"/>
    <lineage>
        <taxon>Bacteria</taxon>
        <taxon>Pseudomonadati</taxon>
        <taxon>Pseudomonadota</taxon>
        <taxon>Alphaproteobacteria</taxon>
        <taxon>Hyphomicrobiales</taxon>
        <taxon>Brucellaceae</taxon>
        <taxon>Brucella/Ochrobactrum group</taxon>
        <taxon>Brucella</taxon>
    </lineage>
</organism>
<name>MURC_BRUMB</name>
<protein>
    <recommendedName>
        <fullName evidence="1">UDP-N-acetylmuramate--L-alanine ligase</fullName>
        <ecNumber evidence="1">6.3.2.8</ecNumber>
    </recommendedName>
    <alternativeName>
        <fullName evidence="1">UDP-N-acetylmuramoyl-L-alanine synthetase</fullName>
    </alternativeName>
</protein>
<keyword id="KW-0067">ATP-binding</keyword>
<keyword id="KW-0131">Cell cycle</keyword>
<keyword id="KW-0132">Cell division</keyword>
<keyword id="KW-0133">Cell shape</keyword>
<keyword id="KW-0961">Cell wall biogenesis/degradation</keyword>
<keyword id="KW-0963">Cytoplasm</keyword>
<keyword id="KW-0436">Ligase</keyword>
<keyword id="KW-0547">Nucleotide-binding</keyword>
<keyword id="KW-0573">Peptidoglycan synthesis</keyword>
<comment type="function">
    <text evidence="1">Cell wall formation.</text>
</comment>
<comment type="catalytic activity">
    <reaction evidence="1">
        <text>UDP-N-acetyl-alpha-D-muramate + L-alanine + ATP = UDP-N-acetyl-alpha-D-muramoyl-L-alanine + ADP + phosphate + H(+)</text>
        <dbReference type="Rhea" id="RHEA:23372"/>
        <dbReference type="ChEBI" id="CHEBI:15378"/>
        <dbReference type="ChEBI" id="CHEBI:30616"/>
        <dbReference type="ChEBI" id="CHEBI:43474"/>
        <dbReference type="ChEBI" id="CHEBI:57972"/>
        <dbReference type="ChEBI" id="CHEBI:70757"/>
        <dbReference type="ChEBI" id="CHEBI:83898"/>
        <dbReference type="ChEBI" id="CHEBI:456216"/>
        <dbReference type="EC" id="6.3.2.8"/>
    </reaction>
</comment>
<comment type="pathway">
    <text evidence="1">Cell wall biogenesis; peptidoglycan biosynthesis.</text>
</comment>
<comment type="subcellular location">
    <subcellularLocation>
        <location evidence="1">Cytoplasm</location>
    </subcellularLocation>
</comment>
<comment type="similarity">
    <text evidence="1">Belongs to the MurCDEF family.</text>
</comment>
<reference key="1">
    <citation type="submission" date="2009-03" db="EMBL/GenBank/DDBJ databases">
        <title>Brucella melitensis ATCC 23457 whole genome shotgun sequencing project.</title>
        <authorList>
            <person name="Setubal J.C."/>
            <person name="Boyle S."/>
            <person name="Crasta O.R."/>
            <person name="Gillespie J.J."/>
            <person name="Kenyon R.W."/>
            <person name="Lu J."/>
            <person name="Mane S."/>
            <person name="Nagrani S."/>
            <person name="Shallom J.M."/>
            <person name="Shallom S."/>
            <person name="Shukla M."/>
            <person name="Snyder E.E."/>
            <person name="Sobral B.W."/>
            <person name="Wattam A.R."/>
            <person name="Will R."/>
            <person name="Williams K."/>
            <person name="Yoo H."/>
            <person name="Munk C."/>
            <person name="Tapia R."/>
            <person name="Han C."/>
            <person name="Detter J.C."/>
            <person name="Bruce D."/>
            <person name="Brettin T.S."/>
        </authorList>
    </citation>
    <scope>NUCLEOTIDE SEQUENCE [LARGE SCALE GENOMIC DNA]</scope>
    <source>
        <strain>ATCC 23457</strain>
    </source>
</reference>
<feature type="chain" id="PRO_1000117396" description="UDP-N-acetylmuramate--L-alanine ligase">
    <location>
        <begin position="1"/>
        <end position="471"/>
    </location>
</feature>
<feature type="binding site" evidence="1">
    <location>
        <begin position="114"/>
        <end position="120"/>
    </location>
    <ligand>
        <name>ATP</name>
        <dbReference type="ChEBI" id="CHEBI:30616"/>
    </ligand>
</feature>
<accession>C0RE69</accession>
<sequence>MKMPLNIGLVHFIGIGGIGMSGIAEVLHNLGYKVQGSDQSDSANVQRLREKGIEVFVGHKAENLGDAEVIVVSTAIKKNNPELVAAREKLLPVVRRAEMLAELMRFRRAVAIGGTHGKTTTTSLVAALLDAGHLDPTVINGGIINAYGTNARMGDGDWMVVEADESDGTFLKLPADIAVVTNIDPEHLDHYGNFDAVRAAFRQFVENVPFYGFGVMCLDHPEVQALVSRIEDRRIITYGSNPQAEVRFVNQRMDGAASLFDVVIRSRKGEATEIKDLRLPMPGLHNVSNATAAIAVAHELGISSDDIRRGLGSFGGVKRRFTHTGSWNGVEIFDDYGHHPVEIRAVLKAAREATSQAGGRVVAIVQPHRYTRLASLFDEFAACFNDADTVIVAPVYTAGEEPIEGVNSEELVSRIKTAGHRDARYATGPEALAPLVASIAQAGDFVVCLGAGNVTQWAYALPKELAEQGKK</sequence>
<proteinExistence type="inferred from homology"/>